<gene>
    <name type="primary">ftnA</name>
    <name type="ordered locus">SAUSA300_1874</name>
</gene>
<feature type="initiator methionine" description="Removed" evidence="1">
    <location>
        <position position="1"/>
    </location>
</feature>
<feature type="chain" id="PRO_0000298970" description="Bacterial non-heme ferritin">
    <location>
        <begin position="2"/>
        <end position="166"/>
    </location>
</feature>
<feature type="domain" description="Ferritin-like diiron" evidence="2">
    <location>
        <begin position="2"/>
        <end position="145"/>
    </location>
</feature>
<feature type="binding site" evidence="2">
    <location>
        <position position="17"/>
    </location>
    <ligand>
        <name>Fe cation</name>
        <dbReference type="ChEBI" id="CHEBI:24875"/>
        <label>1</label>
    </ligand>
</feature>
<feature type="binding site" evidence="2">
    <location>
        <position position="50"/>
    </location>
    <ligand>
        <name>Fe cation</name>
        <dbReference type="ChEBI" id="CHEBI:24875"/>
        <label>1</label>
    </ligand>
</feature>
<feature type="binding site" evidence="2">
    <location>
        <position position="50"/>
    </location>
    <ligand>
        <name>Fe cation</name>
        <dbReference type="ChEBI" id="CHEBI:24875"/>
        <label>2</label>
    </ligand>
</feature>
<feature type="binding site" evidence="2">
    <location>
        <position position="53"/>
    </location>
    <ligand>
        <name>Fe cation</name>
        <dbReference type="ChEBI" id="CHEBI:24875"/>
        <label>1</label>
    </ligand>
</feature>
<feature type="binding site" evidence="2">
    <location>
        <position position="94"/>
    </location>
    <ligand>
        <name>Fe cation</name>
        <dbReference type="ChEBI" id="CHEBI:24875"/>
        <label>2</label>
    </ligand>
</feature>
<feature type="binding site" evidence="2">
    <location>
        <position position="127"/>
    </location>
    <ligand>
        <name>Fe cation</name>
        <dbReference type="ChEBI" id="CHEBI:24875"/>
        <label>2</label>
    </ligand>
</feature>
<proteinExistence type="inferred from homology"/>
<organism>
    <name type="scientific">Staphylococcus aureus (strain USA300)</name>
    <dbReference type="NCBI Taxonomy" id="367830"/>
    <lineage>
        <taxon>Bacteria</taxon>
        <taxon>Bacillati</taxon>
        <taxon>Bacillota</taxon>
        <taxon>Bacilli</taxon>
        <taxon>Bacillales</taxon>
        <taxon>Staphylococcaceae</taxon>
        <taxon>Staphylococcus</taxon>
    </lineage>
</organism>
<accession>Q2FFK2</accession>
<name>FTN_STAA3</name>
<reference key="1">
    <citation type="journal article" date="2006" name="Lancet">
        <title>Complete genome sequence of USA300, an epidemic clone of community-acquired meticillin-resistant Staphylococcus aureus.</title>
        <authorList>
            <person name="Diep B.A."/>
            <person name="Gill S.R."/>
            <person name="Chang R.F."/>
            <person name="Phan T.H."/>
            <person name="Chen J.H."/>
            <person name="Davidson M.G."/>
            <person name="Lin F."/>
            <person name="Lin J."/>
            <person name="Carleton H.A."/>
            <person name="Mongodin E.F."/>
            <person name="Sensabaugh G.F."/>
            <person name="Perdreau-Remington F."/>
        </authorList>
    </citation>
    <scope>NUCLEOTIDE SEQUENCE [LARGE SCALE GENOMIC DNA]</scope>
    <source>
        <strain>USA300</strain>
    </source>
</reference>
<comment type="function">
    <text evidence="1">Iron-storage protein.</text>
</comment>
<comment type="catalytic activity">
    <reaction>
        <text>4 Fe(2+) + O2 + 6 H2O = 4 iron(III) oxide-hydroxide + 12 H(+)</text>
        <dbReference type="Rhea" id="RHEA:11972"/>
        <dbReference type="ChEBI" id="CHEBI:15377"/>
        <dbReference type="ChEBI" id="CHEBI:15378"/>
        <dbReference type="ChEBI" id="CHEBI:15379"/>
        <dbReference type="ChEBI" id="CHEBI:29033"/>
        <dbReference type="ChEBI" id="CHEBI:78619"/>
        <dbReference type="EC" id="1.16.3.2"/>
    </reaction>
</comment>
<comment type="subcellular location">
    <subcellularLocation>
        <location evidence="1">Cytoplasm</location>
    </subcellularLocation>
</comment>
<comment type="similarity">
    <text evidence="3">Belongs to the ferritin family. Prokaryotic subfamily.</text>
</comment>
<protein>
    <recommendedName>
        <fullName>Bacterial non-heme ferritin</fullName>
        <ecNumber>1.16.3.2</ecNumber>
    </recommendedName>
</protein>
<dbReference type="EC" id="1.16.3.2"/>
<dbReference type="EMBL" id="CP000255">
    <property type="protein sequence ID" value="ABD22225.1"/>
    <property type="molecule type" value="Genomic_DNA"/>
</dbReference>
<dbReference type="RefSeq" id="WP_000949467.1">
    <property type="nucleotide sequence ID" value="NZ_CP027476.1"/>
</dbReference>
<dbReference type="SMR" id="Q2FFK2"/>
<dbReference type="KEGG" id="saa:SAUSA300_1874"/>
<dbReference type="HOGENOM" id="CLU_065681_1_2_9"/>
<dbReference type="OMA" id="CEDKGFE"/>
<dbReference type="Proteomes" id="UP000001939">
    <property type="component" value="Chromosome"/>
</dbReference>
<dbReference type="GO" id="GO:0005829">
    <property type="term" value="C:cytosol"/>
    <property type="evidence" value="ECO:0007669"/>
    <property type="project" value="TreeGrafter"/>
</dbReference>
<dbReference type="GO" id="GO:0008199">
    <property type="term" value="F:ferric iron binding"/>
    <property type="evidence" value="ECO:0007669"/>
    <property type="project" value="InterPro"/>
</dbReference>
<dbReference type="GO" id="GO:0008198">
    <property type="term" value="F:ferrous iron binding"/>
    <property type="evidence" value="ECO:0007669"/>
    <property type="project" value="TreeGrafter"/>
</dbReference>
<dbReference type="GO" id="GO:0004322">
    <property type="term" value="F:ferroxidase activity"/>
    <property type="evidence" value="ECO:0007669"/>
    <property type="project" value="TreeGrafter"/>
</dbReference>
<dbReference type="GO" id="GO:0006879">
    <property type="term" value="P:intracellular iron ion homeostasis"/>
    <property type="evidence" value="ECO:0007669"/>
    <property type="project" value="UniProtKB-KW"/>
</dbReference>
<dbReference type="GO" id="GO:0006826">
    <property type="term" value="P:iron ion transport"/>
    <property type="evidence" value="ECO:0007669"/>
    <property type="project" value="InterPro"/>
</dbReference>
<dbReference type="CDD" id="cd01055">
    <property type="entry name" value="Nonheme_Ferritin"/>
    <property type="match status" value="1"/>
</dbReference>
<dbReference type="FunFam" id="1.20.1260.10:FF:000001">
    <property type="entry name" value="Non-heme ferritin"/>
    <property type="match status" value="1"/>
</dbReference>
<dbReference type="Gene3D" id="1.20.1260.10">
    <property type="match status" value="1"/>
</dbReference>
<dbReference type="InterPro" id="IPR001519">
    <property type="entry name" value="Ferritin"/>
</dbReference>
<dbReference type="InterPro" id="IPR012347">
    <property type="entry name" value="Ferritin-like"/>
</dbReference>
<dbReference type="InterPro" id="IPR009040">
    <property type="entry name" value="Ferritin-like_diiron"/>
</dbReference>
<dbReference type="InterPro" id="IPR009078">
    <property type="entry name" value="Ferritin-like_SF"/>
</dbReference>
<dbReference type="InterPro" id="IPR008331">
    <property type="entry name" value="Ferritin_DPS_dom"/>
</dbReference>
<dbReference type="InterPro" id="IPR041719">
    <property type="entry name" value="Ferritin_prok"/>
</dbReference>
<dbReference type="PANTHER" id="PTHR11431:SF127">
    <property type="entry name" value="BACTERIAL NON-HEME FERRITIN"/>
    <property type="match status" value="1"/>
</dbReference>
<dbReference type="PANTHER" id="PTHR11431">
    <property type="entry name" value="FERRITIN"/>
    <property type="match status" value="1"/>
</dbReference>
<dbReference type="Pfam" id="PF00210">
    <property type="entry name" value="Ferritin"/>
    <property type="match status" value="1"/>
</dbReference>
<dbReference type="SUPFAM" id="SSF47240">
    <property type="entry name" value="Ferritin-like"/>
    <property type="match status" value="1"/>
</dbReference>
<dbReference type="PROSITE" id="PS50905">
    <property type="entry name" value="FERRITIN_LIKE"/>
    <property type="match status" value="1"/>
</dbReference>
<evidence type="ECO:0000250" key="1"/>
<evidence type="ECO:0000255" key="2">
    <source>
        <dbReference type="PROSITE-ProRule" id="PRU00085"/>
    </source>
</evidence>
<evidence type="ECO:0000305" key="3"/>
<keyword id="KW-0963">Cytoplasm</keyword>
<keyword id="KW-0408">Iron</keyword>
<keyword id="KW-0409">Iron storage</keyword>
<keyword id="KW-0479">Metal-binding</keyword>
<keyword id="KW-0560">Oxidoreductase</keyword>
<sequence length="166" mass="19589">MLSKNLLEALNDQMNHEYFAAHAYMAMAAYCDKESYEGFANFFIQQAKEERFHGQKIYNYINDRGAHAEFRAVSAPKIDFSSILETFKDSLSQEQEVTRRFYNLSEIARQDKDYATISFLNWFLDEQVEEESMFETHINYLTRIGDDSNALYLYEKELGARTFDEE</sequence>